<name>P2C10_ARATH</name>
<organism>
    <name type="scientific">Arabidopsis thaliana</name>
    <name type="common">Mouse-ear cress</name>
    <dbReference type="NCBI Taxonomy" id="3702"/>
    <lineage>
        <taxon>Eukaryota</taxon>
        <taxon>Viridiplantae</taxon>
        <taxon>Streptophyta</taxon>
        <taxon>Embryophyta</taxon>
        <taxon>Tracheophyta</taxon>
        <taxon>Spermatophyta</taxon>
        <taxon>Magnoliopsida</taxon>
        <taxon>eudicotyledons</taxon>
        <taxon>Gunneridae</taxon>
        <taxon>Pentapetalae</taxon>
        <taxon>rosids</taxon>
        <taxon>malvids</taxon>
        <taxon>Brassicales</taxon>
        <taxon>Brassicaceae</taxon>
        <taxon>Camelineae</taxon>
        <taxon>Arabidopsis</taxon>
    </lineage>
</organism>
<evidence type="ECO:0000250" key="1"/>
<evidence type="ECO:0000255" key="2">
    <source>
        <dbReference type="PROSITE-ProRule" id="PRU01082"/>
    </source>
</evidence>
<evidence type="ECO:0000305" key="3"/>
<comment type="catalytic activity">
    <reaction>
        <text>O-phospho-L-seryl-[protein] + H2O = L-seryl-[protein] + phosphate</text>
        <dbReference type="Rhea" id="RHEA:20629"/>
        <dbReference type="Rhea" id="RHEA-COMP:9863"/>
        <dbReference type="Rhea" id="RHEA-COMP:11604"/>
        <dbReference type="ChEBI" id="CHEBI:15377"/>
        <dbReference type="ChEBI" id="CHEBI:29999"/>
        <dbReference type="ChEBI" id="CHEBI:43474"/>
        <dbReference type="ChEBI" id="CHEBI:83421"/>
        <dbReference type="EC" id="3.1.3.16"/>
    </reaction>
</comment>
<comment type="catalytic activity">
    <reaction>
        <text>O-phospho-L-threonyl-[protein] + H2O = L-threonyl-[protein] + phosphate</text>
        <dbReference type="Rhea" id="RHEA:47004"/>
        <dbReference type="Rhea" id="RHEA-COMP:11060"/>
        <dbReference type="Rhea" id="RHEA-COMP:11605"/>
        <dbReference type="ChEBI" id="CHEBI:15377"/>
        <dbReference type="ChEBI" id="CHEBI:30013"/>
        <dbReference type="ChEBI" id="CHEBI:43474"/>
        <dbReference type="ChEBI" id="CHEBI:61977"/>
        <dbReference type="EC" id="3.1.3.16"/>
    </reaction>
</comment>
<comment type="cofactor">
    <cofactor evidence="1">
        <name>Mg(2+)</name>
        <dbReference type="ChEBI" id="CHEBI:18420"/>
    </cofactor>
    <cofactor evidence="1">
        <name>Mn(2+)</name>
        <dbReference type="ChEBI" id="CHEBI:29035"/>
    </cofactor>
    <text evidence="1">Binds 2 magnesium or manganese ions per subunit.</text>
</comment>
<comment type="similarity">
    <text evidence="3">Belongs to the PP2C family.</text>
</comment>
<proteinExistence type="evidence at transcript level"/>
<sequence>MAKLCCFGSSDYDLVVGRASTSSGKGRNNDGEIKFGYSLVKGKANHPMEDYHVSKFVKIDGNELGLFAIYDGHLGERVPAYLQKHLFSNILKEEQFRYDPQRSIIAAYEKTDQAILSHSSDLGRGGSTAVTAILMNGRRLWVANVGDSRAVLSQGGQAIQMTIDHEPHTERLSIEGKGGFVSNMPGDVPRVNGQLAVSRAFGDKSLKTHLRSDPDVKDSSIDDHTDVLVLASDGLWKVMANQEAIDIARRIKDPLKAAKELTTEALRRDSKDDISCIVVRLR</sequence>
<feature type="chain" id="PRO_0000367941" description="Probable protein phosphatase 2C 10">
    <location>
        <begin position="1"/>
        <end position="282"/>
    </location>
</feature>
<feature type="domain" description="PPM-type phosphatase" evidence="2">
    <location>
        <begin position="34"/>
        <end position="281"/>
    </location>
</feature>
<feature type="binding site" evidence="1">
    <location>
        <position position="71"/>
    </location>
    <ligand>
        <name>Mn(2+)</name>
        <dbReference type="ChEBI" id="CHEBI:29035"/>
        <label>1</label>
    </ligand>
</feature>
<feature type="binding site" evidence="1">
    <location>
        <position position="71"/>
    </location>
    <ligand>
        <name>Mn(2+)</name>
        <dbReference type="ChEBI" id="CHEBI:29035"/>
        <label>2</label>
    </ligand>
</feature>
<feature type="binding site" evidence="1">
    <location>
        <position position="72"/>
    </location>
    <ligand>
        <name>Mn(2+)</name>
        <dbReference type="ChEBI" id="CHEBI:29035"/>
        <label>1</label>
    </ligand>
</feature>
<feature type="binding site" evidence="1">
    <location>
        <position position="233"/>
    </location>
    <ligand>
        <name>Mn(2+)</name>
        <dbReference type="ChEBI" id="CHEBI:29035"/>
        <label>2</label>
    </ligand>
</feature>
<feature type="binding site" evidence="1">
    <location>
        <position position="272"/>
    </location>
    <ligand>
        <name>Mn(2+)</name>
        <dbReference type="ChEBI" id="CHEBI:29035"/>
        <label>2</label>
    </ligand>
</feature>
<gene>
    <name type="ordered locus">At1g34750</name>
    <name type="ORF">F21H2.4</name>
</gene>
<keyword id="KW-0378">Hydrolase</keyword>
<keyword id="KW-0460">Magnesium</keyword>
<keyword id="KW-0464">Manganese</keyword>
<keyword id="KW-0479">Metal-binding</keyword>
<keyword id="KW-0904">Protein phosphatase</keyword>
<keyword id="KW-1185">Reference proteome</keyword>
<dbReference type="EC" id="3.1.3.16"/>
<dbReference type="EMBL" id="AC007894">
    <property type="protein sequence ID" value="AAD46006.1"/>
    <property type="molecule type" value="Genomic_DNA"/>
</dbReference>
<dbReference type="EMBL" id="CP002684">
    <property type="protein sequence ID" value="AEE31734.1"/>
    <property type="molecule type" value="Genomic_DNA"/>
</dbReference>
<dbReference type="EMBL" id="CP002684">
    <property type="protein sequence ID" value="ANM59169.1"/>
    <property type="molecule type" value="Genomic_DNA"/>
</dbReference>
<dbReference type="EMBL" id="CP002684">
    <property type="protein sequence ID" value="ANM59170.1"/>
    <property type="molecule type" value="Genomic_DNA"/>
</dbReference>
<dbReference type="EMBL" id="AF370608">
    <property type="protein sequence ID" value="AAK43927.1"/>
    <property type="molecule type" value="mRNA"/>
</dbReference>
<dbReference type="EMBL" id="AK228199">
    <property type="protein sequence ID" value="BAF00153.1"/>
    <property type="molecule type" value="mRNA"/>
</dbReference>
<dbReference type="EMBL" id="BT033070">
    <property type="protein sequence ID" value="ACE82593.1"/>
    <property type="molecule type" value="mRNA"/>
</dbReference>
<dbReference type="RefSeq" id="NP_001321553.1">
    <property type="nucleotide sequence ID" value="NM_001333118.1"/>
</dbReference>
<dbReference type="RefSeq" id="NP_001321554.1">
    <property type="nucleotide sequence ID" value="NM_001333117.1"/>
</dbReference>
<dbReference type="RefSeq" id="NP_174731.1">
    <property type="nucleotide sequence ID" value="NM_103195.4"/>
</dbReference>
<dbReference type="SMR" id="Q9S9Z7"/>
<dbReference type="BioGRID" id="25611">
    <property type="interactions" value="2"/>
</dbReference>
<dbReference type="FunCoup" id="Q9S9Z7">
    <property type="interactions" value="115"/>
</dbReference>
<dbReference type="IntAct" id="Q9S9Z7">
    <property type="interactions" value="2"/>
</dbReference>
<dbReference type="MINT" id="Q9S9Z7"/>
<dbReference type="STRING" id="3702.Q9S9Z7"/>
<dbReference type="iPTMnet" id="Q9S9Z7"/>
<dbReference type="SwissPalm" id="Q9S9Z7"/>
<dbReference type="PaxDb" id="3702-AT1G34750.1"/>
<dbReference type="ProteomicsDB" id="248790"/>
<dbReference type="EnsemblPlants" id="AT1G34750.1">
    <property type="protein sequence ID" value="AT1G34750.1"/>
    <property type="gene ID" value="AT1G34750"/>
</dbReference>
<dbReference type="EnsemblPlants" id="AT1G34750.2">
    <property type="protein sequence ID" value="AT1G34750.2"/>
    <property type="gene ID" value="AT1G34750"/>
</dbReference>
<dbReference type="EnsemblPlants" id="AT1G34750.3">
    <property type="protein sequence ID" value="AT1G34750.3"/>
    <property type="gene ID" value="AT1G34750"/>
</dbReference>
<dbReference type="GeneID" id="840379"/>
<dbReference type="Gramene" id="AT1G34750.1">
    <property type="protein sequence ID" value="AT1G34750.1"/>
    <property type="gene ID" value="AT1G34750"/>
</dbReference>
<dbReference type="Gramene" id="AT1G34750.2">
    <property type="protein sequence ID" value="AT1G34750.2"/>
    <property type="gene ID" value="AT1G34750"/>
</dbReference>
<dbReference type="Gramene" id="AT1G34750.3">
    <property type="protein sequence ID" value="AT1G34750.3"/>
    <property type="gene ID" value="AT1G34750"/>
</dbReference>
<dbReference type="KEGG" id="ath:AT1G34750"/>
<dbReference type="Araport" id="AT1G34750"/>
<dbReference type="TAIR" id="AT1G34750">
    <property type="gene designation" value="CIPP1"/>
</dbReference>
<dbReference type="eggNOG" id="KOG0698">
    <property type="taxonomic scope" value="Eukaryota"/>
</dbReference>
<dbReference type="HOGENOM" id="CLU_013173_0_1_1"/>
<dbReference type="InParanoid" id="Q9S9Z7"/>
<dbReference type="OMA" id="IVIDHEY"/>
<dbReference type="OrthoDB" id="10264738at2759"/>
<dbReference type="PhylomeDB" id="Q9S9Z7"/>
<dbReference type="PRO" id="PR:Q9S9Z7"/>
<dbReference type="Proteomes" id="UP000006548">
    <property type="component" value="Chromosome 1"/>
</dbReference>
<dbReference type="ExpressionAtlas" id="Q9S9Z7">
    <property type="expression patterns" value="baseline and differential"/>
</dbReference>
<dbReference type="GO" id="GO:0005886">
    <property type="term" value="C:plasma membrane"/>
    <property type="evidence" value="ECO:0007005"/>
    <property type="project" value="TAIR"/>
</dbReference>
<dbReference type="GO" id="GO:0046872">
    <property type="term" value="F:metal ion binding"/>
    <property type="evidence" value="ECO:0007669"/>
    <property type="project" value="UniProtKB-KW"/>
</dbReference>
<dbReference type="GO" id="GO:0004722">
    <property type="term" value="F:protein serine/threonine phosphatase activity"/>
    <property type="evidence" value="ECO:0007669"/>
    <property type="project" value="UniProtKB-EC"/>
</dbReference>
<dbReference type="CDD" id="cd00143">
    <property type="entry name" value="PP2Cc"/>
    <property type="match status" value="1"/>
</dbReference>
<dbReference type="FunFam" id="3.60.40.10:FF:000010">
    <property type="entry name" value="Probable protein phosphatase 2C 39"/>
    <property type="match status" value="1"/>
</dbReference>
<dbReference type="Gene3D" id="3.60.40.10">
    <property type="entry name" value="PPM-type phosphatase domain"/>
    <property type="match status" value="1"/>
</dbReference>
<dbReference type="InterPro" id="IPR015655">
    <property type="entry name" value="PP2C"/>
</dbReference>
<dbReference type="InterPro" id="IPR036457">
    <property type="entry name" value="PPM-type-like_dom_sf"/>
</dbReference>
<dbReference type="InterPro" id="IPR001932">
    <property type="entry name" value="PPM-type_phosphatase-like_dom"/>
</dbReference>
<dbReference type="PANTHER" id="PTHR47992">
    <property type="entry name" value="PROTEIN PHOSPHATASE"/>
    <property type="match status" value="1"/>
</dbReference>
<dbReference type="Pfam" id="PF00481">
    <property type="entry name" value="PP2C"/>
    <property type="match status" value="1"/>
</dbReference>
<dbReference type="SMART" id="SM00331">
    <property type="entry name" value="PP2C_SIG"/>
    <property type="match status" value="1"/>
</dbReference>
<dbReference type="SMART" id="SM00332">
    <property type="entry name" value="PP2Cc"/>
    <property type="match status" value="1"/>
</dbReference>
<dbReference type="SUPFAM" id="SSF81606">
    <property type="entry name" value="PP2C-like"/>
    <property type="match status" value="1"/>
</dbReference>
<dbReference type="PROSITE" id="PS51746">
    <property type="entry name" value="PPM_2"/>
    <property type="match status" value="1"/>
</dbReference>
<accession>Q9S9Z7</accession>
<reference key="1">
    <citation type="journal article" date="2000" name="Nature">
        <title>Sequence and analysis of chromosome 1 of the plant Arabidopsis thaliana.</title>
        <authorList>
            <person name="Theologis A."/>
            <person name="Ecker J.R."/>
            <person name="Palm C.J."/>
            <person name="Federspiel N.A."/>
            <person name="Kaul S."/>
            <person name="White O."/>
            <person name="Alonso J."/>
            <person name="Altafi H."/>
            <person name="Araujo R."/>
            <person name="Bowman C.L."/>
            <person name="Brooks S.Y."/>
            <person name="Buehler E."/>
            <person name="Chan A."/>
            <person name="Chao Q."/>
            <person name="Chen H."/>
            <person name="Cheuk R.F."/>
            <person name="Chin C.W."/>
            <person name="Chung M.K."/>
            <person name="Conn L."/>
            <person name="Conway A.B."/>
            <person name="Conway A.R."/>
            <person name="Creasy T.H."/>
            <person name="Dewar K."/>
            <person name="Dunn P."/>
            <person name="Etgu P."/>
            <person name="Feldblyum T.V."/>
            <person name="Feng J.-D."/>
            <person name="Fong B."/>
            <person name="Fujii C.Y."/>
            <person name="Gill J.E."/>
            <person name="Goldsmith A.D."/>
            <person name="Haas B."/>
            <person name="Hansen N.F."/>
            <person name="Hughes B."/>
            <person name="Huizar L."/>
            <person name="Hunter J.L."/>
            <person name="Jenkins J."/>
            <person name="Johnson-Hopson C."/>
            <person name="Khan S."/>
            <person name="Khaykin E."/>
            <person name="Kim C.J."/>
            <person name="Koo H.L."/>
            <person name="Kremenetskaia I."/>
            <person name="Kurtz D.B."/>
            <person name="Kwan A."/>
            <person name="Lam B."/>
            <person name="Langin-Hooper S."/>
            <person name="Lee A."/>
            <person name="Lee J.M."/>
            <person name="Lenz C.A."/>
            <person name="Li J.H."/>
            <person name="Li Y.-P."/>
            <person name="Lin X."/>
            <person name="Liu S.X."/>
            <person name="Liu Z.A."/>
            <person name="Luros J.S."/>
            <person name="Maiti R."/>
            <person name="Marziali A."/>
            <person name="Militscher J."/>
            <person name="Miranda M."/>
            <person name="Nguyen M."/>
            <person name="Nierman W.C."/>
            <person name="Osborne B.I."/>
            <person name="Pai G."/>
            <person name="Peterson J."/>
            <person name="Pham P.K."/>
            <person name="Rizzo M."/>
            <person name="Rooney T."/>
            <person name="Rowley D."/>
            <person name="Sakano H."/>
            <person name="Salzberg S.L."/>
            <person name="Schwartz J.R."/>
            <person name="Shinn P."/>
            <person name="Southwick A.M."/>
            <person name="Sun H."/>
            <person name="Tallon L.J."/>
            <person name="Tambunga G."/>
            <person name="Toriumi M.J."/>
            <person name="Town C.D."/>
            <person name="Utterback T."/>
            <person name="Van Aken S."/>
            <person name="Vaysberg M."/>
            <person name="Vysotskaia V.S."/>
            <person name="Walker M."/>
            <person name="Wu D."/>
            <person name="Yu G."/>
            <person name="Fraser C.M."/>
            <person name="Venter J.C."/>
            <person name="Davis R.W."/>
        </authorList>
    </citation>
    <scope>NUCLEOTIDE SEQUENCE [LARGE SCALE GENOMIC DNA]</scope>
    <source>
        <strain>cv. Columbia</strain>
    </source>
</reference>
<reference key="2">
    <citation type="journal article" date="2017" name="Plant J.">
        <title>Araport11: a complete reannotation of the Arabidopsis thaliana reference genome.</title>
        <authorList>
            <person name="Cheng C.Y."/>
            <person name="Krishnakumar V."/>
            <person name="Chan A.P."/>
            <person name="Thibaud-Nissen F."/>
            <person name="Schobel S."/>
            <person name="Town C.D."/>
        </authorList>
    </citation>
    <scope>GENOME REANNOTATION</scope>
    <source>
        <strain>cv. Columbia</strain>
    </source>
</reference>
<reference key="3">
    <citation type="journal article" date="2003" name="Science">
        <title>Empirical analysis of transcriptional activity in the Arabidopsis genome.</title>
        <authorList>
            <person name="Yamada K."/>
            <person name="Lim J."/>
            <person name="Dale J.M."/>
            <person name="Chen H."/>
            <person name="Shinn P."/>
            <person name="Palm C.J."/>
            <person name="Southwick A.M."/>
            <person name="Wu H.C."/>
            <person name="Kim C.J."/>
            <person name="Nguyen M."/>
            <person name="Pham P.K."/>
            <person name="Cheuk R.F."/>
            <person name="Karlin-Newmann G."/>
            <person name="Liu S.X."/>
            <person name="Lam B."/>
            <person name="Sakano H."/>
            <person name="Wu T."/>
            <person name="Yu G."/>
            <person name="Miranda M."/>
            <person name="Quach H.L."/>
            <person name="Tripp M."/>
            <person name="Chang C.H."/>
            <person name="Lee J.M."/>
            <person name="Toriumi M.J."/>
            <person name="Chan M.M."/>
            <person name="Tang C.C."/>
            <person name="Onodera C.S."/>
            <person name="Deng J.M."/>
            <person name="Akiyama K."/>
            <person name="Ansari Y."/>
            <person name="Arakawa T."/>
            <person name="Banh J."/>
            <person name="Banno F."/>
            <person name="Bowser L."/>
            <person name="Brooks S.Y."/>
            <person name="Carninci P."/>
            <person name="Chao Q."/>
            <person name="Choy N."/>
            <person name="Enju A."/>
            <person name="Goldsmith A.D."/>
            <person name="Gurjal M."/>
            <person name="Hansen N.F."/>
            <person name="Hayashizaki Y."/>
            <person name="Johnson-Hopson C."/>
            <person name="Hsuan V.W."/>
            <person name="Iida K."/>
            <person name="Karnes M."/>
            <person name="Khan S."/>
            <person name="Koesema E."/>
            <person name="Ishida J."/>
            <person name="Jiang P.X."/>
            <person name="Jones T."/>
            <person name="Kawai J."/>
            <person name="Kamiya A."/>
            <person name="Meyers C."/>
            <person name="Nakajima M."/>
            <person name="Narusaka M."/>
            <person name="Seki M."/>
            <person name="Sakurai T."/>
            <person name="Satou M."/>
            <person name="Tamse R."/>
            <person name="Vaysberg M."/>
            <person name="Wallender E.K."/>
            <person name="Wong C."/>
            <person name="Yamamura Y."/>
            <person name="Yuan S."/>
            <person name="Shinozaki K."/>
            <person name="Davis R.W."/>
            <person name="Theologis A."/>
            <person name="Ecker J.R."/>
        </authorList>
    </citation>
    <scope>NUCLEOTIDE SEQUENCE [LARGE SCALE MRNA]</scope>
    <source>
        <strain>cv. Columbia</strain>
    </source>
</reference>
<reference key="4">
    <citation type="submission" date="2006-07" db="EMBL/GenBank/DDBJ databases">
        <title>Large-scale analysis of RIKEN Arabidopsis full-length (RAFL) cDNAs.</title>
        <authorList>
            <person name="Totoki Y."/>
            <person name="Seki M."/>
            <person name="Ishida J."/>
            <person name="Nakajima M."/>
            <person name="Enju A."/>
            <person name="Kamiya A."/>
            <person name="Narusaka M."/>
            <person name="Shin-i T."/>
            <person name="Nakagawa M."/>
            <person name="Sakamoto N."/>
            <person name="Oishi K."/>
            <person name="Kohara Y."/>
            <person name="Kobayashi M."/>
            <person name="Toyoda A."/>
            <person name="Sakaki Y."/>
            <person name="Sakurai T."/>
            <person name="Iida K."/>
            <person name="Akiyama K."/>
            <person name="Satou M."/>
            <person name="Toyoda T."/>
            <person name="Konagaya A."/>
            <person name="Carninci P."/>
            <person name="Kawai J."/>
            <person name="Hayashizaki Y."/>
            <person name="Shinozaki K."/>
        </authorList>
    </citation>
    <scope>NUCLEOTIDE SEQUENCE [LARGE SCALE MRNA]</scope>
    <source>
        <strain>cv. Columbia</strain>
    </source>
</reference>
<reference key="5">
    <citation type="submission" date="2008-06" db="EMBL/GenBank/DDBJ databases">
        <title>Arabidopsis ORF clones.</title>
        <authorList>
            <person name="de los Reyes C."/>
            <person name="Quan R."/>
            <person name="Chen H."/>
            <person name="Bautista V.R."/>
            <person name="Kim C.J."/>
            <person name="Ecker J.R."/>
        </authorList>
    </citation>
    <scope>NUCLEOTIDE SEQUENCE [LARGE SCALE MRNA]</scope>
    <source>
        <strain>cv. Columbia</strain>
    </source>
</reference>
<reference key="6">
    <citation type="journal article" date="2008" name="BMC Genomics">
        <title>Genome-wide and expression analysis of protein phosphatase 2C in rice and Arabidopsis.</title>
        <authorList>
            <person name="Xue T."/>
            <person name="Wang D."/>
            <person name="Zhang S."/>
            <person name="Ehlting J."/>
            <person name="Ni F."/>
            <person name="Jacab S."/>
            <person name="Zheng C."/>
            <person name="Zhong Y."/>
        </authorList>
    </citation>
    <scope>GENE FAMILY</scope>
    <scope>NOMENCLATURE</scope>
</reference>
<protein>
    <recommendedName>
        <fullName>Probable protein phosphatase 2C 10</fullName>
        <shortName>AtPP2C10</shortName>
        <ecNumber>3.1.3.16</ecNumber>
    </recommendedName>
</protein>